<reference key="1">
    <citation type="submission" date="2006-12" db="EMBL/GenBank/DDBJ databases">
        <title>Complete sequence of chromosome 1 of Verminephrobacter eiseniae EF01-2.</title>
        <authorList>
            <person name="Copeland A."/>
            <person name="Lucas S."/>
            <person name="Lapidus A."/>
            <person name="Barry K."/>
            <person name="Detter J.C."/>
            <person name="Glavina del Rio T."/>
            <person name="Dalin E."/>
            <person name="Tice H."/>
            <person name="Pitluck S."/>
            <person name="Chertkov O."/>
            <person name="Brettin T."/>
            <person name="Bruce D."/>
            <person name="Han C."/>
            <person name="Tapia R."/>
            <person name="Gilna P."/>
            <person name="Schmutz J."/>
            <person name="Larimer F."/>
            <person name="Land M."/>
            <person name="Hauser L."/>
            <person name="Kyrpides N."/>
            <person name="Kim E."/>
            <person name="Stahl D."/>
            <person name="Richardson P."/>
        </authorList>
    </citation>
    <scope>NUCLEOTIDE SEQUENCE [LARGE SCALE GENOMIC DNA]</scope>
    <source>
        <strain>EF01-2</strain>
    </source>
</reference>
<name>ATPA_VEREI</name>
<organism>
    <name type="scientific">Verminephrobacter eiseniae (strain EF01-2)</name>
    <dbReference type="NCBI Taxonomy" id="391735"/>
    <lineage>
        <taxon>Bacteria</taxon>
        <taxon>Pseudomonadati</taxon>
        <taxon>Pseudomonadota</taxon>
        <taxon>Betaproteobacteria</taxon>
        <taxon>Burkholderiales</taxon>
        <taxon>Comamonadaceae</taxon>
        <taxon>Verminephrobacter</taxon>
    </lineage>
</organism>
<proteinExistence type="inferred from homology"/>
<sequence>MQLNPAEISELIKSRIEGLGVSADIRNQGTVVSVTDGIVRVHGLSDAMQGEMLEFPPTADGTPSFGLALNLERDSVGAVILGEYEHISEGGTVKCTGRILEVPVGPELIGRVVNALGQPIDGKGPINAKMTDVIEKVAPGVIARKSVDQPMQTGLKSIDSMVPVGRGQRELIIGDRQTGKTAVAIDAIINQKGQNMTCVYVAIGQKASSIKNVVRSLEQAGAMDYTIVVAASASESAAMQYVSAYSGCTMGEYFRDRGQDALIVYDDLSKQAVAYRQVSLLLRRPPGREAYPGDVFYLHSRLLERAARVNADYVEAFTKGAVKGKTGSLTALPIIETQAGDVSAFVPTNVISITDGQIFLETSLFNAGIRPAINAGISVSRVGSSAQTNLIKNQSGGIRTDLAQYRELAAFAQFASDLDEATRKQLDRGARVTELLKQTQYSPLPISLMNATLFAVNKGFTDDIDVKKVLPFEHGFHQLLKTSHAALLETMEKNGAKWDVKPAKPDDSAEKQAFKKVCQDAEAELLAAATSFKKSFA</sequence>
<gene>
    <name evidence="1" type="primary">atpA</name>
    <name type="ordered locus">Veis_0478</name>
</gene>
<keyword id="KW-0066">ATP synthesis</keyword>
<keyword id="KW-0067">ATP-binding</keyword>
<keyword id="KW-0997">Cell inner membrane</keyword>
<keyword id="KW-1003">Cell membrane</keyword>
<keyword id="KW-0139">CF(1)</keyword>
<keyword id="KW-0375">Hydrogen ion transport</keyword>
<keyword id="KW-0406">Ion transport</keyword>
<keyword id="KW-0472">Membrane</keyword>
<keyword id="KW-0547">Nucleotide-binding</keyword>
<keyword id="KW-1185">Reference proteome</keyword>
<keyword id="KW-1278">Translocase</keyword>
<keyword id="KW-0813">Transport</keyword>
<accession>A1WF56</accession>
<protein>
    <recommendedName>
        <fullName evidence="1">ATP synthase subunit alpha</fullName>
        <ecNumber evidence="1">7.1.2.2</ecNumber>
    </recommendedName>
    <alternativeName>
        <fullName evidence="1">ATP synthase F1 sector subunit alpha</fullName>
    </alternativeName>
    <alternativeName>
        <fullName evidence="1">F-ATPase subunit alpha</fullName>
    </alternativeName>
</protein>
<feature type="chain" id="PRO_0000302713" description="ATP synthase subunit alpha">
    <location>
        <begin position="1"/>
        <end position="537"/>
    </location>
</feature>
<feature type="binding site" evidence="1">
    <location>
        <begin position="174"/>
        <end position="181"/>
    </location>
    <ligand>
        <name>ATP</name>
        <dbReference type="ChEBI" id="CHEBI:30616"/>
    </ligand>
</feature>
<feature type="site" description="Required for activity" evidence="1">
    <location>
        <position position="378"/>
    </location>
</feature>
<comment type="function">
    <text evidence="1">Produces ATP from ADP in the presence of a proton gradient across the membrane. The alpha chain is a regulatory subunit.</text>
</comment>
<comment type="catalytic activity">
    <reaction evidence="1">
        <text>ATP + H2O + 4 H(+)(in) = ADP + phosphate + 5 H(+)(out)</text>
        <dbReference type="Rhea" id="RHEA:57720"/>
        <dbReference type="ChEBI" id="CHEBI:15377"/>
        <dbReference type="ChEBI" id="CHEBI:15378"/>
        <dbReference type="ChEBI" id="CHEBI:30616"/>
        <dbReference type="ChEBI" id="CHEBI:43474"/>
        <dbReference type="ChEBI" id="CHEBI:456216"/>
        <dbReference type="EC" id="7.1.2.2"/>
    </reaction>
</comment>
<comment type="subunit">
    <text evidence="1">F-type ATPases have 2 components, CF(1) - the catalytic core - and CF(0) - the membrane proton channel. CF(1) has five subunits: alpha(3), beta(3), gamma(1), delta(1), epsilon(1). CF(0) has three main subunits: a(1), b(2) and c(9-12). The alpha and beta chains form an alternating ring which encloses part of the gamma chain. CF(1) is attached to CF(0) by a central stalk formed by the gamma and epsilon chains, while a peripheral stalk is formed by the delta and b chains.</text>
</comment>
<comment type="subcellular location">
    <subcellularLocation>
        <location evidence="1">Cell inner membrane</location>
        <topology evidence="1">Peripheral membrane protein</topology>
    </subcellularLocation>
</comment>
<comment type="similarity">
    <text evidence="1">Belongs to the ATPase alpha/beta chains family.</text>
</comment>
<dbReference type="EC" id="7.1.2.2" evidence="1"/>
<dbReference type="EMBL" id="CP000542">
    <property type="protein sequence ID" value="ABM56263.1"/>
    <property type="molecule type" value="Genomic_DNA"/>
</dbReference>
<dbReference type="RefSeq" id="WP_011808279.1">
    <property type="nucleotide sequence ID" value="NC_008786.1"/>
</dbReference>
<dbReference type="SMR" id="A1WF56"/>
<dbReference type="STRING" id="391735.Veis_0478"/>
<dbReference type="GeneID" id="76459188"/>
<dbReference type="KEGG" id="vei:Veis_0478"/>
<dbReference type="eggNOG" id="COG0056">
    <property type="taxonomic scope" value="Bacteria"/>
</dbReference>
<dbReference type="HOGENOM" id="CLU_010091_2_1_4"/>
<dbReference type="OrthoDB" id="9803053at2"/>
<dbReference type="Proteomes" id="UP000000374">
    <property type="component" value="Chromosome"/>
</dbReference>
<dbReference type="GO" id="GO:0005886">
    <property type="term" value="C:plasma membrane"/>
    <property type="evidence" value="ECO:0007669"/>
    <property type="project" value="UniProtKB-SubCell"/>
</dbReference>
<dbReference type="GO" id="GO:0045259">
    <property type="term" value="C:proton-transporting ATP synthase complex"/>
    <property type="evidence" value="ECO:0007669"/>
    <property type="project" value="UniProtKB-KW"/>
</dbReference>
<dbReference type="GO" id="GO:0043531">
    <property type="term" value="F:ADP binding"/>
    <property type="evidence" value="ECO:0007669"/>
    <property type="project" value="TreeGrafter"/>
</dbReference>
<dbReference type="GO" id="GO:0005524">
    <property type="term" value="F:ATP binding"/>
    <property type="evidence" value="ECO:0007669"/>
    <property type="project" value="UniProtKB-UniRule"/>
</dbReference>
<dbReference type="GO" id="GO:0046933">
    <property type="term" value="F:proton-transporting ATP synthase activity, rotational mechanism"/>
    <property type="evidence" value="ECO:0007669"/>
    <property type="project" value="UniProtKB-UniRule"/>
</dbReference>
<dbReference type="CDD" id="cd18113">
    <property type="entry name" value="ATP-synt_F1_alpha_C"/>
    <property type="match status" value="1"/>
</dbReference>
<dbReference type="CDD" id="cd18116">
    <property type="entry name" value="ATP-synt_F1_alpha_N"/>
    <property type="match status" value="1"/>
</dbReference>
<dbReference type="CDD" id="cd01132">
    <property type="entry name" value="F1-ATPase_alpha_CD"/>
    <property type="match status" value="1"/>
</dbReference>
<dbReference type="FunFam" id="1.20.150.20:FF:000001">
    <property type="entry name" value="ATP synthase subunit alpha"/>
    <property type="match status" value="1"/>
</dbReference>
<dbReference type="FunFam" id="2.40.30.20:FF:000001">
    <property type="entry name" value="ATP synthase subunit alpha"/>
    <property type="match status" value="1"/>
</dbReference>
<dbReference type="FunFam" id="3.40.50.300:FF:000002">
    <property type="entry name" value="ATP synthase subunit alpha"/>
    <property type="match status" value="1"/>
</dbReference>
<dbReference type="Gene3D" id="2.40.30.20">
    <property type="match status" value="1"/>
</dbReference>
<dbReference type="Gene3D" id="1.20.150.20">
    <property type="entry name" value="ATP synthase alpha/beta chain, C-terminal domain"/>
    <property type="match status" value="1"/>
</dbReference>
<dbReference type="Gene3D" id="3.40.50.300">
    <property type="entry name" value="P-loop containing nucleotide triphosphate hydrolases"/>
    <property type="match status" value="1"/>
</dbReference>
<dbReference type="HAMAP" id="MF_01346">
    <property type="entry name" value="ATP_synth_alpha_bact"/>
    <property type="match status" value="1"/>
</dbReference>
<dbReference type="InterPro" id="IPR023366">
    <property type="entry name" value="ATP_synth_asu-like_sf"/>
</dbReference>
<dbReference type="InterPro" id="IPR000793">
    <property type="entry name" value="ATP_synth_asu_C"/>
</dbReference>
<dbReference type="InterPro" id="IPR038376">
    <property type="entry name" value="ATP_synth_asu_C_sf"/>
</dbReference>
<dbReference type="InterPro" id="IPR033732">
    <property type="entry name" value="ATP_synth_F1_a_nt-bd_dom"/>
</dbReference>
<dbReference type="InterPro" id="IPR005294">
    <property type="entry name" value="ATP_synth_F1_asu"/>
</dbReference>
<dbReference type="InterPro" id="IPR020003">
    <property type="entry name" value="ATPase_a/bsu_AS"/>
</dbReference>
<dbReference type="InterPro" id="IPR004100">
    <property type="entry name" value="ATPase_F1/V1/A1_a/bsu_N"/>
</dbReference>
<dbReference type="InterPro" id="IPR036121">
    <property type="entry name" value="ATPase_F1/V1/A1_a/bsu_N_sf"/>
</dbReference>
<dbReference type="InterPro" id="IPR000194">
    <property type="entry name" value="ATPase_F1/V1/A1_a/bsu_nucl-bd"/>
</dbReference>
<dbReference type="InterPro" id="IPR027417">
    <property type="entry name" value="P-loop_NTPase"/>
</dbReference>
<dbReference type="NCBIfam" id="TIGR00962">
    <property type="entry name" value="atpA"/>
    <property type="match status" value="1"/>
</dbReference>
<dbReference type="NCBIfam" id="NF009884">
    <property type="entry name" value="PRK13343.1"/>
    <property type="match status" value="1"/>
</dbReference>
<dbReference type="PANTHER" id="PTHR48082">
    <property type="entry name" value="ATP SYNTHASE SUBUNIT ALPHA, MITOCHONDRIAL"/>
    <property type="match status" value="1"/>
</dbReference>
<dbReference type="PANTHER" id="PTHR48082:SF2">
    <property type="entry name" value="ATP SYNTHASE SUBUNIT ALPHA, MITOCHONDRIAL"/>
    <property type="match status" value="1"/>
</dbReference>
<dbReference type="Pfam" id="PF00006">
    <property type="entry name" value="ATP-synt_ab"/>
    <property type="match status" value="1"/>
</dbReference>
<dbReference type="Pfam" id="PF00306">
    <property type="entry name" value="ATP-synt_ab_C"/>
    <property type="match status" value="1"/>
</dbReference>
<dbReference type="Pfam" id="PF02874">
    <property type="entry name" value="ATP-synt_ab_N"/>
    <property type="match status" value="1"/>
</dbReference>
<dbReference type="SUPFAM" id="SSF47917">
    <property type="entry name" value="C-terminal domain of alpha and beta subunits of F1 ATP synthase"/>
    <property type="match status" value="1"/>
</dbReference>
<dbReference type="SUPFAM" id="SSF50615">
    <property type="entry name" value="N-terminal domain of alpha and beta subunits of F1 ATP synthase"/>
    <property type="match status" value="1"/>
</dbReference>
<dbReference type="SUPFAM" id="SSF52540">
    <property type="entry name" value="P-loop containing nucleoside triphosphate hydrolases"/>
    <property type="match status" value="1"/>
</dbReference>
<dbReference type="PROSITE" id="PS00152">
    <property type="entry name" value="ATPASE_ALPHA_BETA"/>
    <property type="match status" value="1"/>
</dbReference>
<evidence type="ECO:0000255" key="1">
    <source>
        <dbReference type="HAMAP-Rule" id="MF_01346"/>
    </source>
</evidence>